<accession>A6L6D1</accession>
<name>RL21_PHOV8</name>
<protein>
    <recommendedName>
        <fullName evidence="1">Large ribosomal subunit protein bL21</fullName>
    </recommendedName>
    <alternativeName>
        <fullName evidence="2">50S ribosomal protein L21</fullName>
    </alternativeName>
</protein>
<proteinExistence type="inferred from homology"/>
<reference key="1">
    <citation type="journal article" date="2007" name="PLoS Biol.">
        <title>Evolution of symbiotic bacteria in the distal human intestine.</title>
        <authorList>
            <person name="Xu J."/>
            <person name="Mahowald M.A."/>
            <person name="Ley R.E."/>
            <person name="Lozupone C.A."/>
            <person name="Hamady M."/>
            <person name="Martens E.C."/>
            <person name="Henrissat B."/>
            <person name="Coutinho P.M."/>
            <person name="Minx P."/>
            <person name="Latreille P."/>
            <person name="Cordum H."/>
            <person name="Van Brunt A."/>
            <person name="Kim K."/>
            <person name="Fulton R.S."/>
            <person name="Fulton L.A."/>
            <person name="Clifton S.W."/>
            <person name="Wilson R.K."/>
            <person name="Knight R.D."/>
            <person name="Gordon J.I."/>
        </authorList>
    </citation>
    <scope>NUCLEOTIDE SEQUENCE [LARGE SCALE GENOMIC DNA]</scope>
    <source>
        <strain>ATCC 8482 / DSM 1447 / JCM 5826 / CCUG 4940 / NBRC 14291 / NCTC 11154</strain>
    </source>
</reference>
<evidence type="ECO:0000255" key="1">
    <source>
        <dbReference type="HAMAP-Rule" id="MF_01363"/>
    </source>
</evidence>
<evidence type="ECO:0000305" key="2"/>
<keyword id="KW-0687">Ribonucleoprotein</keyword>
<keyword id="KW-0689">Ribosomal protein</keyword>
<keyword id="KW-0694">RNA-binding</keyword>
<keyword id="KW-0699">rRNA-binding</keyword>
<feature type="chain" id="PRO_1000067805" description="Large ribosomal subunit protein bL21">
    <location>
        <begin position="1"/>
        <end position="105"/>
    </location>
</feature>
<sequence>MYVIVEINGQQFKAEEGKKLFVHHIQNAENGATVEFEKVLLVDNNGTVTVGAPTVEGAKVVCEVVSPLVKGDKVLVFHKKRRKGYRKLNGHRQQFTELTIKQVIA</sequence>
<organism>
    <name type="scientific">Phocaeicola vulgatus (strain ATCC 8482 / DSM 1447 / JCM 5826 / CCUG 4940 / NBRC 14291 / NCTC 11154)</name>
    <name type="common">Bacteroides vulgatus</name>
    <dbReference type="NCBI Taxonomy" id="435590"/>
    <lineage>
        <taxon>Bacteria</taxon>
        <taxon>Pseudomonadati</taxon>
        <taxon>Bacteroidota</taxon>
        <taxon>Bacteroidia</taxon>
        <taxon>Bacteroidales</taxon>
        <taxon>Bacteroidaceae</taxon>
        <taxon>Phocaeicola</taxon>
    </lineage>
</organism>
<gene>
    <name evidence="1" type="primary">rplU</name>
    <name type="ordered locus">BVU_3634</name>
</gene>
<comment type="function">
    <text evidence="1">This protein binds to 23S rRNA in the presence of protein L20.</text>
</comment>
<comment type="subunit">
    <text evidence="1">Part of the 50S ribosomal subunit. Contacts protein L20.</text>
</comment>
<comment type="similarity">
    <text evidence="1">Belongs to the bacterial ribosomal protein bL21 family.</text>
</comment>
<dbReference type="EMBL" id="CP000139">
    <property type="protein sequence ID" value="ABR41245.1"/>
    <property type="molecule type" value="Genomic_DNA"/>
</dbReference>
<dbReference type="RefSeq" id="WP_005839375.1">
    <property type="nucleotide sequence ID" value="NZ_JANSWM010000066.1"/>
</dbReference>
<dbReference type="SMR" id="A6L6D1"/>
<dbReference type="STRING" id="435590.BVU_3634"/>
<dbReference type="PaxDb" id="435590-BVU_3634"/>
<dbReference type="GeneID" id="93447643"/>
<dbReference type="KEGG" id="bvu:BVU_3634"/>
<dbReference type="eggNOG" id="COG0261">
    <property type="taxonomic scope" value="Bacteria"/>
</dbReference>
<dbReference type="HOGENOM" id="CLU_061463_3_2_10"/>
<dbReference type="BioCyc" id="BVUL435590:G1G59-3766-MONOMER"/>
<dbReference type="Proteomes" id="UP000002861">
    <property type="component" value="Chromosome"/>
</dbReference>
<dbReference type="GO" id="GO:0005737">
    <property type="term" value="C:cytoplasm"/>
    <property type="evidence" value="ECO:0007669"/>
    <property type="project" value="UniProtKB-ARBA"/>
</dbReference>
<dbReference type="GO" id="GO:1990904">
    <property type="term" value="C:ribonucleoprotein complex"/>
    <property type="evidence" value="ECO:0007669"/>
    <property type="project" value="UniProtKB-KW"/>
</dbReference>
<dbReference type="GO" id="GO:0005840">
    <property type="term" value="C:ribosome"/>
    <property type="evidence" value="ECO:0007669"/>
    <property type="project" value="UniProtKB-KW"/>
</dbReference>
<dbReference type="GO" id="GO:0019843">
    <property type="term" value="F:rRNA binding"/>
    <property type="evidence" value="ECO:0007669"/>
    <property type="project" value="UniProtKB-UniRule"/>
</dbReference>
<dbReference type="GO" id="GO:0003735">
    <property type="term" value="F:structural constituent of ribosome"/>
    <property type="evidence" value="ECO:0007669"/>
    <property type="project" value="InterPro"/>
</dbReference>
<dbReference type="GO" id="GO:0006412">
    <property type="term" value="P:translation"/>
    <property type="evidence" value="ECO:0007669"/>
    <property type="project" value="UniProtKB-UniRule"/>
</dbReference>
<dbReference type="HAMAP" id="MF_01363">
    <property type="entry name" value="Ribosomal_bL21"/>
    <property type="match status" value="1"/>
</dbReference>
<dbReference type="InterPro" id="IPR028909">
    <property type="entry name" value="bL21-like"/>
</dbReference>
<dbReference type="InterPro" id="IPR036164">
    <property type="entry name" value="bL21-like_sf"/>
</dbReference>
<dbReference type="InterPro" id="IPR001787">
    <property type="entry name" value="Ribosomal_bL21"/>
</dbReference>
<dbReference type="NCBIfam" id="TIGR00061">
    <property type="entry name" value="L21"/>
    <property type="match status" value="1"/>
</dbReference>
<dbReference type="PANTHER" id="PTHR21349">
    <property type="entry name" value="50S RIBOSOMAL PROTEIN L21"/>
    <property type="match status" value="1"/>
</dbReference>
<dbReference type="PANTHER" id="PTHR21349:SF0">
    <property type="entry name" value="LARGE RIBOSOMAL SUBUNIT PROTEIN BL21M"/>
    <property type="match status" value="1"/>
</dbReference>
<dbReference type="Pfam" id="PF00829">
    <property type="entry name" value="Ribosomal_L21p"/>
    <property type="match status" value="1"/>
</dbReference>
<dbReference type="SUPFAM" id="SSF141091">
    <property type="entry name" value="L21p-like"/>
    <property type="match status" value="1"/>
</dbReference>